<keyword id="KW-0678">Repressor</keyword>
<keyword id="KW-0687">Ribonucleoprotein</keyword>
<keyword id="KW-0689">Ribosomal protein</keyword>
<keyword id="KW-0694">RNA-binding</keyword>
<keyword id="KW-0699">rRNA-binding</keyword>
<keyword id="KW-0810">Translation regulation</keyword>
<keyword id="KW-0820">tRNA-binding</keyword>
<organism>
    <name type="scientific">Escherichia coli O157:H7 (strain EC4115 / EHEC)</name>
    <dbReference type="NCBI Taxonomy" id="444450"/>
    <lineage>
        <taxon>Bacteria</taxon>
        <taxon>Pseudomonadati</taxon>
        <taxon>Pseudomonadota</taxon>
        <taxon>Gammaproteobacteria</taxon>
        <taxon>Enterobacterales</taxon>
        <taxon>Enterobacteriaceae</taxon>
        <taxon>Escherichia</taxon>
    </lineage>
</organism>
<dbReference type="EMBL" id="CP001164">
    <property type="protein sequence ID" value="ACI35660.1"/>
    <property type="molecule type" value="Genomic_DNA"/>
</dbReference>
<dbReference type="RefSeq" id="WP_001096684.1">
    <property type="nucleotide sequence ID" value="NC_011353.1"/>
</dbReference>
<dbReference type="SMR" id="B5Z080"/>
<dbReference type="GeneID" id="93777910"/>
<dbReference type="KEGG" id="ecf:ECH74115_5449"/>
<dbReference type="HOGENOM" id="CLU_062853_0_0_6"/>
<dbReference type="GO" id="GO:0022625">
    <property type="term" value="C:cytosolic large ribosomal subunit"/>
    <property type="evidence" value="ECO:0007669"/>
    <property type="project" value="TreeGrafter"/>
</dbReference>
<dbReference type="GO" id="GO:0019843">
    <property type="term" value="F:rRNA binding"/>
    <property type="evidence" value="ECO:0007669"/>
    <property type="project" value="UniProtKB-UniRule"/>
</dbReference>
<dbReference type="GO" id="GO:0003735">
    <property type="term" value="F:structural constituent of ribosome"/>
    <property type="evidence" value="ECO:0007669"/>
    <property type="project" value="InterPro"/>
</dbReference>
<dbReference type="GO" id="GO:0000049">
    <property type="term" value="F:tRNA binding"/>
    <property type="evidence" value="ECO:0007669"/>
    <property type="project" value="UniProtKB-KW"/>
</dbReference>
<dbReference type="GO" id="GO:0006417">
    <property type="term" value="P:regulation of translation"/>
    <property type="evidence" value="ECO:0007669"/>
    <property type="project" value="UniProtKB-KW"/>
</dbReference>
<dbReference type="GO" id="GO:0006412">
    <property type="term" value="P:translation"/>
    <property type="evidence" value="ECO:0007669"/>
    <property type="project" value="UniProtKB-UniRule"/>
</dbReference>
<dbReference type="CDD" id="cd00403">
    <property type="entry name" value="Ribosomal_L1"/>
    <property type="match status" value="1"/>
</dbReference>
<dbReference type="FunFam" id="3.40.50.790:FF:000001">
    <property type="entry name" value="50S ribosomal protein L1"/>
    <property type="match status" value="1"/>
</dbReference>
<dbReference type="Gene3D" id="3.30.190.20">
    <property type="match status" value="1"/>
</dbReference>
<dbReference type="Gene3D" id="3.40.50.790">
    <property type="match status" value="1"/>
</dbReference>
<dbReference type="HAMAP" id="MF_01318_B">
    <property type="entry name" value="Ribosomal_uL1_B"/>
    <property type="match status" value="1"/>
</dbReference>
<dbReference type="InterPro" id="IPR005878">
    <property type="entry name" value="Ribosom_uL1_bac-type"/>
</dbReference>
<dbReference type="InterPro" id="IPR002143">
    <property type="entry name" value="Ribosomal_uL1"/>
</dbReference>
<dbReference type="InterPro" id="IPR023674">
    <property type="entry name" value="Ribosomal_uL1-like"/>
</dbReference>
<dbReference type="InterPro" id="IPR028364">
    <property type="entry name" value="Ribosomal_uL1/biogenesis"/>
</dbReference>
<dbReference type="InterPro" id="IPR016095">
    <property type="entry name" value="Ribosomal_uL1_3-a/b-sand"/>
</dbReference>
<dbReference type="InterPro" id="IPR023673">
    <property type="entry name" value="Ribosomal_uL1_CS"/>
</dbReference>
<dbReference type="NCBIfam" id="TIGR01169">
    <property type="entry name" value="rplA_bact"/>
    <property type="match status" value="1"/>
</dbReference>
<dbReference type="PANTHER" id="PTHR36427">
    <property type="entry name" value="54S RIBOSOMAL PROTEIN L1, MITOCHONDRIAL"/>
    <property type="match status" value="1"/>
</dbReference>
<dbReference type="PANTHER" id="PTHR36427:SF3">
    <property type="entry name" value="LARGE RIBOSOMAL SUBUNIT PROTEIN UL1M"/>
    <property type="match status" value="1"/>
</dbReference>
<dbReference type="Pfam" id="PF00687">
    <property type="entry name" value="Ribosomal_L1"/>
    <property type="match status" value="1"/>
</dbReference>
<dbReference type="PIRSF" id="PIRSF002155">
    <property type="entry name" value="Ribosomal_L1"/>
    <property type="match status" value="1"/>
</dbReference>
<dbReference type="SUPFAM" id="SSF56808">
    <property type="entry name" value="Ribosomal protein L1"/>
    <property type="match status" value="1"/>
</dbReference>
<dbReference type="PROSITE" id="PS01199">
    <property type="entry name" value="RIBOSOMAL_L1"/>
    <property type="match status" value="1"/>
</dbReference>
<name>RL1_ECO5E</name>
<feature type="chain" id="PRO_1000141397" description="Large ribosomal subunit protein uL1">
    <location>
        <begin position="1"/>
        <end position="234"/>
    </location>
</feature>
<evidence type="ECO:0000255" key="1">
    <source>
        <dbReference type="HAMAP-Rule" id="MF_01318"/>
    </source>
</evidence>
<evidence type="ECO:0000305" key="2"/>
<comment type="function">
    <text evidence="1">Binds directly to 23S rRNA. The L1 stalk is quite mobile in the ribosome, and is involved in E site tRNA release.</text>
</comment>
<comment type="function">
    <text evidence="1">Protein L1 is also a translational repressor protein, it controls the translation of the L11 operon by binding to its mRNA.</text>
</comment>
<comment type="subunit">
    <text evidence="1">Part of the 50S ribosomal subunit.</text>
</comment>
<comment type="similarity">
    <text evidence="1">Belongs to the universal ribosomal protein uL1 family.</text>
</comment>
<gene>
    <name evidence="1" type="primary">rplA</name>
    <name type="ordered locus">ECH74115_5449</name>
</gene>
<proteinExistence type="inferred from homology"/>
<accession>B5Z080</accession>
<reference key="1">
    <citation type="journal article" date="2011" name="Proc. Natl. Acad. Sci. U.S.A.">
        <title>Genomic anatomy of Escherichia coli O157:H7 outbreaks.</title>
        <authorList>
            <person name="Eppinger M."/>
            <person name="Mammel M.K."/>
            <person name="Leclerc J.E."/>
            <person name="Ravel J."/>
            <person name="Cebula T.A."/>
        </authorList>
    </citation>
    <scope>NUCLEOTIDE SEQUENCE [LARGE SCALE GENOMIC DNA]</scope>
    <source>
        <strain>EC4115 / EHEC</strain>
    </source>
</reference>
<sequence length="234" mass="24730">MAKLTKRMRVIREKVDATKQYDINEAIALLKELATAKFVESVDVAVNLGIDARKSDQNVRGATVLPHGTGRSVRVAVFTQGANAEAAKAAGAELVGMEDLADQIKKGEMNFDVVIASPDAMRVVGQLGQVLGPRGLMPNPKVGTVTPNVAEAVKNAKAGQVRYRNDKNGIIHTTIGKVDFDADKLKENLEALLVALKKAKPTQAKGVYIKKVSISTTMGAGVAVDQAGLSASVN</sequence>
<protein>
    <recommendedName>
        <fullName evidence="1">Large ribosomal subunit protein uL1</fullName>
    </recommendedName>
    <alternativeName>
        <fullName evidence="2">50S ribosomal protein L1</fullName>
    </alternativeName>
</protein>